<gene>
    <name type="primary">RTCB</name>
    <name type="ORF">PB000816.02.0</name>
    <name evidence="2" type="ORF">PBANKA_0941200</name>
</gene>
<proteinExistence type="inferred from homology"/>
<accession>Q4YUZ9</accession>
<accession>A0A509AMN8</accession>
<organism>
    <name type="scientific">Plasmodium berghei (strain Anka)</name>
    <dbReference type="NCBI Taxonomy" id="5823"/>
    <lineage>
        <taxon>Eukaryota</taxon>
        <taxon>Sar</taxon>
        <taxon>Alveolata</taxon>
        <taxon>Apicomplexa</taxon>
        <taxon>Aconoidasida</taxon>
        <taxon>Haemosporida</taxon>
        <taxon>Plasmodiidae</taxon>
        <taxon>Plasmodium</taxon>
        <taxon>Plasmodium (Vinckeia)</taxon>
    </lineage>
</organism>
<reference evidence="3" key="1">
    <citation type="journal article" date="2014" name="BMC Biol.">
        <title>A comprehensive evaluation of rodent malaria parasite genomes and gene expression.</title>
        <authorList>
            <person name="Otto T.D."/>
            <person name="Bohme U."/>
            <person name="Jackson A.P."/>
            <person name="Hunt M."/>
            <person name="Franke-Fayard B."/>
            <person name="Hoeijmakers W.A."/>
            <person name="Religa A.A."/>
            <person name="Robertson L."/>
            <person name="Sanders M."/>
            <person name="Ogun S.A."/>
            <person name="Cunningham D."/>
            <person name="Erhart A."/>
            <person name="Billker O."/>
            <person name="Khan S.M."/>
            <person name="Stunnenberg H.G."/>
            <person name="Langhorne J."/>
            <person name="Holder A.A."/>
            <person name="Waters A.P."/>
            <person name="Newbold C.I."/>
            <person name="Pain A."/>
            <person name="Berriman M."/>
            <person name="Janse C.J."/>
        </authorList>
    </citation>
    <scope>NUCLEOTIDE SEQUENCE [LARGE SCALE GENOMIC DNA]</scope>
    <source>
        <strain evidence="3">ANKA</strain>
    </source>
</reference>
<name>RTCB_PLABA</name>
<evidence type="ECO:0000255" key="1">
    <source>
        <dbReference type="HAMAP-Rule" id="MF_03144"/>
    </source>
</evidence>
<evidence type="ECO:0000312" key="2">
    <source>
        <dbReference type="EMBL" id="VUC55954.1"/>
    </source>
</evidence>
<evidence type="ECO:0000312" key="3">
    <source>
        <dbReference type="Proteomes" id="UP000074855"/>
    </source>
</evidence>
<feature type="chain" id="PRO_0000407238" description="RNA-splicing ligase RtcB homolog">
    <location>
        <begin position="1"/>
        <end position="507"/>
    </location>
</feature>
<feature type="active site" description="GMP-histidine intermediate" evidence="1">
    <location>
        <position position="430"/>
    </location>
</feature>
<feature type="binding site" evidence="1">
    <location>
        <position position="121"/>
    </location>
    <ligand>
        <name>Mn(2+)</name>
        <dbReference type="ChEBI" id="CHEBI:29035"/>
        <label>1</label>
    </ligand>
</feature>
<feature type="binding site" evidence="1">
    <location>
        <position position="124"/>
    </location>
    <ligand>
        <name>Mn(2+)</name>
        <dbReference type="ChEBI" id="CHEBI:29035"/>
        <label>1</label>
    </ligand>
</feature>
<feature type="binding site" evidence="1">
    <location>
        <position position="124"/>
    </location>
    <ligand>
        <name>Mn(2+)</name>
        <dbReference type="ChEBI" id="CHEBI:29035"/>
        <label>2</label>
    </ligand>
</feature>
<feature type="binding site" evidence="1">
    <location>
        <begin position="228"/>
        <end position="232"/>
    </location>
    <ligand>
        <name>GMP</name>
        <dbReference type="ChEBI" id="CHEBI:58115"/>
    </ligand>
</feature>
<feature type="binding site" evidence="1">
    <location>
        <position position="229"/>
    </location>
    <ligand>
        <name>Mn(2+)</name>
        <dbReference type="ChEBI" id="CHEBI:29035"/>
        <label>1</label>
    </ligand>
</feature>
<feature type="binding site" evidence="1">
    <location>
        <position position="261"/>
    </location>
    <ligand>
        <name>Mn(2+)</name>
        <dbReference type="ChEBI" id="CHEBI:29035"/>
        <label>2</label>
    </ligand>
</feature>
<feature type="binding site" evidence="1">
    <location>
        <begin position="355"/>
        <end position="356"/>
    </location>
    <ligand>
        <name>GMP</name>
        <dbReference type="ChEBI" id="CHEBI:58115"/>
    </ligand>
</feature>
<feature type="binding site" evidence="1">
    <location>
        <position position="355"/>
    </location>
    <ligand>
        <name>Mn(2+)</name>
        <dbReference type="ChEBI" id="CHEBI:29035"/>
        <label>2</label>
    </ligand>
</feature>
<feature type="binding site" evidence="1">
    <location>
        <begin position="404"/>
        <end position="407"/>
    </location>
    <ligand>
        <name>GMP</name>
        <dbReference type="ChEBI" id="CHEBI:58115"/>
    </ligand>
</feature>
<feature type="binding site" evidence="1">
    <location>
        <position position="411"/>
    </location>
    <ligand>
        <name>GMP</name>
        <dbReference type="ChEBI" id="CHEBI:58115"/>
    </ligand>
</feature>
<feature type="binding site" evidence="1">
    <location>
        <begin position="430"/>
        <end position="433"/>
    </location>
    <ligand>
        <name>GMP</name>
        <dbReference type="ChEBI" id="CHEBI:58115"/>
    </ligand>
</feature>
<feature type="binding site" evidence="1">
    <location>
        <position position="506"/>
    </location>
    <ligand>
        <name>GMP</name>
        <dbReference type="ChEBI" id="CHEBI:58115"/>
    </ligand>
</feature>
<sequence>MMKHGKSEDVFKYIEKTNEKNLYRINKGLVPGMNVEGNIYVNEKLKLLIDEEIKMYQLNKCSTFLPAVIQIANVSTLPGIVKASIALPDVHAGYGFSIGNVAAFDMNNEKAVISPGGVGFDINCGVRLIRTNLFYNDIKDKQEELAQLLFNHIPVGVGSQGFILCNQNNLDDALSLGMDWSVKEGYSWIEDKLNCEDNGRSLYANSDYVSVRAKKRGITQMGTLGAGNHYAEIQIVDEIYNKKSAKLMGIEKKNQVCIMIHSGSRGLGHQIATDALIEMEKIMSKYKINVIDKQLACTPIHSPEGQNYLKAMGAACNFAWINRSSMTFLARQAFSKIFNQSPDDLDMHVIYDVSHNIAKIEEHFINGKVQNLLVHRKGSTRAFPPFHPLVPLDYQYCGQPILIGGTMGTYSYVLTGTEKAMENTFGSTCHGAGRALSRNKSRNALSYSDVLSNLKEKNISIRVASPKLIMEEAPESYKNVSEVVQTCHDSGISNKCFRLRPVAVIKG</sequence>
<protein>
    <recommendedName>
        <fullName evidence="1">RNA-splicing ligase RtcB homolog</fullName>
        <ecNumber evidence="1">6.5.1.8</ecNumber>
    </recommendedName>
    <alternativeName>
        <fullName evidence="1">3'-phosphate/5'-hydroxy nucleic acid ligase</fullName>
    </alternativeName>
</protein>
<keyword id="KW-0342">GTP-binding</keyword>
<keyword id="KW-0436">Ligase</keyword>
<keyword id="KW-0464">Manganese</keyword>
<keyword id="KW-0479">Metal-binding</keyword>
<keyword id="KW-0547">Nucleotide-binding</keyword>
<keyword id="KW-1185">Reference proteome</keyword>
<keyword id="KW-0819">tRNA processing</keyword>
<dbReference type="EC" id="6.5.1.8" evidence="1"/>
<dbReference type="EMBL" id="LK023124">
    <property type="protein sequence ID" value="VUC55954.1"/>
    <property type="molecule type" value="Genomic_DNA"/>
</dbReference>
<dbReference type="SMR" id="Q4YUZ9"/>
<dbReference type="STRING" id="5823.A0A509AMN8"/>
<dbReference type="VEuPathDB" id="PlasmoDB:PBANKA_0941200"/>
<dbReference type="eggNOG" id="KOG3833">
    <property type="taxonomic scope" value="Eukaryota"/>
</dbReference>
<dbReference type="InParanoid" id="A0A509AMN8"/>
<dbReference type="OMA" id="QTRGVEC"/>
<dbReference type="Proteomes" id="UP000074855">
    <property type="component" value="Chromosome 9"/>
</dbReference>
<dbReference type="GO" id="GO:0005634">
    <property type="term" value="C:nucleus"/>
    <property type="evidence" value="ECO:0007669"/>
    <property type="project" value="TreeGrafter"/>
</dbReference>
<dbReference type="GO" id="GO:0072669">
    <property type="term" value="C:tRNA-splicing ligase complex"/>
    <property type="evidence" value="ECO:0007669"/>
    <property type="project" value="UniProtKB-UniRule"/>
</dbReference>
<dbReference type="GO" id="GO:0005525">
    <property type="term" value="F:GTP binding"/>
    <property type="evidence" value="ECO:0007669"/>
    <property type="project" value="UniProtKB-KW"/>
</dbReference>
<dbReference type="GO" id="GO:0046872">
    <property type="term" value="F:metal ion binding"/>
    <property type="evidence" value="ECO:0007669"/>
    <property type="project" value="UniProtKB-KW"/>
</dbReference>
<dbReference type="GO" id="GO:0003972">
    <property type="term" value="F:RNA ligase (ATP) activity"/>
    <property type="evidence" value="ECO:0007669"/>
    <property type="project" value="TreeGrafter"/>
</dbReference>
<dbReference type="GO" id="GO:0170057">
    <property type="term" value="F:RNA ligase (GTP) activity"/>
    <property type="evidence" value="ECO:0007669"/>
    <property type="project" value="UniProtKB-EC"/>
</dbReference>
<dbReference type="GO" id="GO:0006388">
    <property type="term" value="P:tRNA splicing, via endonucleolytic cleavage and ligation"/>
    <property type="evidence" value="ECO:0007669"/>
    <property type="project" value="UniProtKB-UniRule"/>
</dbReference>
<dbReference type="FunFam" id="3.90.1860.10:FF:000001">
    <property type="entry name" value="tRNA-splicing ligase RtcB homolog"/>
    <property type="match status" value="1"/>
</dbReference>
<dbReference type="Gene3D" id="3.90.1860.10">
    <property type="entry name" value="tRNA-splicing ligase RtcB"/>
    <property type="match status" value="1"/>
</dbReference>
<dbReference type="HAMAP" id="MF_03144">
    <property type="entry name" value="RtcB_euk"/>
    <property type="match status" value="1"/>
</dbReference>
<dbReference type="InterPro" id="IPR001233">
    <property type="entry name" value="RtcB"/>
</dbReference>
<dbReference type="InterPro" id="IPR036025">
    <property type="entry name" value="RtcB-like_sf"/>
</dbReference>
<dbReference type="InterPro" id="IPR027513">
    <property type="entry name" value="RtcB_euk"/>
</dbReference>
<dbReference type="PANTHER" id="PTHR11118">
    <property type="entry name" value="RNA-SPLICING LIGASE RTCB HOMOLOG"/>
    <property type="match status" value="1"/>
</dbReference>
<dbReference type="PANTHER" id="PTHR11118:SF1">
    <property type="entry name" value="RNA-SPLICING LIGASE RTCB HOMOLOG"/>
    <property type="match status" value="1"/>
</dbReference>
<dbReference type="Pfam" id="PF01139">
    <property type="entry name" value="RtcB"/>
    <property type="match status" value="1"/>
</dbReference>
<dbReference type="SUPFAM" id="SSF103365">
    <property type="entry name" value="Hypothetical protein PH1602"/>
    <property type="match status" value="1"/>
</dbReference>
<comment type="function">
    <text evidence="1">Catalytic subunit of the tRNA-splicing ligase complex that acts by directly joining spliced tRNA halves to mature-sized tRNAs by incorporating the precursor-derived splice junction phosphate into the mature tRNA as a canonical 3',5'-phosphodiester. May act as an RNA ligase with broad substrate specificity, and may function toward other RNAs.</text>
</comment>
<comment type="catalytic activity">
    <reaction evidence="1">
        <text>a 3'-end 3'-phospho-ribonucleotide-RNA + a 5'-end dephospho-ribonucleoside-RNA + GTP = a ribonucleotidyl-ribonucleotide-RNA + GMP + diphosphate</text>
        <dbReference type="Rhea" id="RHEA:68076"/>
        <dbReference type="Rhea" id="RHEA-COMP:10463"/>
        <dbReference type="Rhea" id="RHEA-COMP:13936"/>
        <dbReference type="Rhea" id="RHEA-COMP:17355"/>
        <dbReference type="ChEBI" id="CHEBI:33019"/>
        <dbReference type="ChEBI" id="CHEBI:37565"/>
        <dbReference type="ChEBI" id="CHEBI:58115"/>
        <dbReference type="ChEBI" id="CHEBI:83062"/>
        <dbReference type="ChEBI" id="CHEBI:138284"/>
        <dbReference type="ChEBI" id="CHEBI:173118"/>
        <dbReference type="EC" id="6.5.1.8"/>
    </reaction>
</comment>
<comment type="catalytic activity">
    <reaction evidence="1">
        <text>a 3'-end 2',3'-cyclophospho-ribonucleotide-RNA + a 5'-end dephospho-ribonucleoside-RNA + GTP + H2O = a ribonucleotidyl-ribonucleotide-RNA + GMP + diphosphate + H(+)</text>
        <dbReference type="Rhea" id="RHEA:68080"/>
        <dbReference type="Rhea" id="RHEA-COMP:10464"/>
        <dbReference type="Rhea" id="RHEA-COMP:13936"/>
        <dbReference type="Rhea" id="RHEA-COMP:17355"/>
        <dbReference type="ChEBI" id="CHEBI:15377"/>
        <dbReference type="ChEBI" id="CHEBI:15378"/>
        <dbReference type="ChEBI" id="CHEBI:33019"/>
        <dbReference type="ChEBI" id="CHEBI:37565"/>
        <dbReference type="ChEBI" id="CHEBI:58115"/>
        <dbReference type="ChEBI" id="CHEBI:83064"/>
        <dbReference type="ChEBI" id="CHEBI:138284"/>
        <dbReference type="ChEBI" id="CHEBI:173118"/>
        <dbReference type="EC" id="6.5.1.8"/>
    </reaction>
</comment>
<comment type="cofactor">
    <cofactor evidence="1">
        <name>Mn(2+)</name>
        <dbReference type="ChEBI" id="CHEBI:29035"/>
    </cofactor>
    <text evidence="1">Binds 2 manganese ions per subunit.</text>
</comment>
<comment type="subunit">
    <text evidence="1">Catalytic component of the tRNA-splicing ligase complex.</text>
</comment>
<comment type="miscellaneous">
    <text evidence="1">Ligation probably proceeds through 3 nucleotidyl transfer steps, with 2',3'-cyclic phosphate termini being hydrolyzed to 3'-P termini in a step that precedes 3'-P activation with GMP. In the first nucleotidyl transfer step, RTCB reacts with GTP to form a covalent RTCB-histidine-GMP intermediate with release of PPi; in the second step, the GMP moiety is transferred to the RNA 3'-P; in the third step, the 5'-OH from the opposite RNA strand attacks the activated 3'-P to form a 3',5'-phosphodiester bond and release GMP.</text>
</comment>
<comment type="similarity">
    <text evidence="1">Belongs to the RtcB family.</text>
</comment>